<proteinExistence type="inferred from homology"/>
<protein>
    <recommendedName>
        <fullName>NAD(P)H-quinone oxidoreductase subunit H, chloroplastic</fullName>
        <ecNumber>7.1.1.-</ecNumber>
    </recommendedName>
    <alternativeName>
        <fullName>NAD(P)H dehydrogenase subunit H</fullName>
    </alternativeName>
    <alternativeName>
        <fullName>NADH-plastoquinone oxidoreductase 49 kDa subunit</fullName>
    </alternativeName>
    <alternativeName>
        <fullName>NADH-plastoquinone oxidoreductase subunit H</fullName>
    </alternativeName>
</protein>
<gene>
    <name type="primary">ndhH</name>
</gene>
<comment type="function">
    <text evidence="1">NDH shuttles electrons from NAD(P)H:plastoquinone, via FMN and iron-sulfur (Fe-S) centers, to quinones in the photosynthetic chain and possibly in a chloroplast respiratory chain. The immediate electron acceptor for the enzyme in this species is believed to be plastoquinone. Couples the redox reaction to proton translocation, and thus conserves the redox energy in a proton gradient (By similarity).</text>
</comment>
<comment type="catalytic activity">
    <reaction>
        <text>a plastoquinone + NADH + (n+1) H(+)(in) = a plastoquinol + NAD(+) + n H(+)(out)</text>
        <dbReference type="Rhea" id="RHEA:42608"/>
        <dbReference type="Rhea" id="RHEA-COMP:9561"/>
        <dbReference type="Rhea" id="RHEA-COMP:9562"/>
        <dbReference type="ChEBI" id="CHEBI:15378"/>
        <dbReference type="ChEBI" id="CHEBI:17757"/>
        <dbReference type="ChEBI" id="CHEBI:57540"/>
        <dbReference type="ChEBI" id="CHEBI:57945"/>
        <dbReference type="ChEBI" id="CHEBI:62192"/>
    </reaction>
</comment>
<comment type="catalytic activity">
    <reaction>
        <text>a plastoquinone + NADPH + (n+1) H(+)(in) = a plastoquinol + NADP(+) + n H(+)(out)</text>
        <dbReference type="Rhea" id="RHEA:42612"/>
        <dbReference type="Rhea" id="RHEA-COMP:9561"/>
        <dbReference type="Rhea" id="RHEA-COMP:9562"/>
        <dbReference type="ChEBI" id="CHEBI:15378"/>
        <dbReference type="ChEBI" id="CHEBI:17757"/>
        <dbReference type="ChEBI" id="CHEBI:57783"/>
        <dbReference type="ChEBI" id="CHEBI:58349"/>
        <dbReference type="ChEBI" id="CHEBI:62192"/>
    </reaction>
</comment>
<comment type="subunit">
    <text evidence="1">NDH is composed of at least 16 different subunits, 5 of which are encoded in the nucleus.</text>
</comment>
<comment type="subcellular location">
    <subcellularLocation>
        <location evidence="1">Plastid</location>
        <location evidence="1">Chloroplast thylakoid membrane</location>
        <topology evidence="1">Peripheral membrane protein</topology>
        <orientation evidence="1">Stromal side</orientation>
    </subcellularLocation>
</comment>
<comment type="similarity">
    <text evidence="2">Belongs to the complex I 49 kDa subunit family.</text>
</comment>
<evidence type="ECO:0000250" key="1"/>
<evidence type="ECO:0000305" key="2"/>
<reference key="1">
    <citation type="journal article" date="1989" name="J. Biol. Chem.">
        <title>A new rearrangement of angiosperm chloroplast DNA in rye (Secale cereale) involving translocation and duplication of the ribosomal rpS15 gene.</title>
        <authorList>
            <person name="Prombona A."/>
            <person name="Subramanian A.R."/>
        </authorList>
    </citation>
    <scope>NUCLEOTIDE SEQUENCE [GENOMIC DNA]</scope>
</reference>
<geneLocation type="chloroplast"/>
<organism>
    <name type="scientific">Secale cereale</name>
    <name type="common">Rye</name>
    <dbReference type="NCBI Taxonomy" id="4550"/>
    <lineage>
        <taxon>Eukaryota</taxon>
        <taxon>Viridiplantae</taxon>
        <taxon>Streptophyta</taxon>
        <taxon>Embryophyta</taxon>
        <taxon>Tracheophyta</taxon>
        <taxon>Spermatophyta</taxon>
        <taxon>Magnoliopsida</taxon>
        <taxon>Liliopsida</taxon>
        <taxon>Poales</taxon>
        <taxon>Poaceae</taxon>
        <taxon>BOP clade</taxon>
        <taxon>Pooideae</taxon>
        <taxon>Triticodae</taxon>
        <taxon>Triticeae</taxon>
        <taxon>Hordeinae</taxon>
        <taxon>Secale</taxon>
    </lineage>
</organism>
<feature type="chain" id="PRO_0000118610" description="NAD(P)H-quinone oxidoreductase subunit H, chloroplastic">
    <location>
        <begin position="1" status="less than"/>
        <end position="90" status="greater than"/>
    </location>
</feature>
<feature type="non-terminal residue">
    <location>
        <position position="1"/>
    </location>
</feature>
<feature type="non-terminal residue">
    <location>
        <position position="90"/>
    </location>
</feature>
<dbReference type="EC" id="7.1.1.-"/>
<dbReference type="EMBL" id="X14557">
    <property type="protein sequence ID" value="CAA32694.1"/>
    <property type="molecule type" value="Genomic_DNA"/>
</dbReference>
<dbReference type="PIR" id="C34435">
    <property type="entry name" value="C34435"/>
</dbReference>
<dbReference type="SMR" id="P27758"/>
<dbReference type="GO" id="GO:0009535">
    <property type="term" value="C:chloroplast thylakoid membrane"/>
    <property type="evidence" value="ECO:0007669"/>
    <property type="project" value="UniProtKB-SubCell"/>
</dbReference>
<dbReference type="GO" id="GO:0016651">
    <property type="term" value="F:oxidoreductase activity, acting on NAD(P)H"/>
    <property type="evidence" value="ECO:0007669"/>
    <property type="project" value="InterPro"/>
</dbReference>
<dbReference type="GO" id="GO:0048038">
    <property type="term" value="F:quinone binding"/>
    <property type="evidence" value="ECO:0007669"/>
    <property type="project" value="UniProtKB-KW"/>
</dbReference>
<dbReference type="Gene3D" id="1.10.645.10">
    <property type="entry name" value="Cytochrome-c3 Hydrogenase, chain B"/>
    <property type="match status" value="1"/>
</dbReference>
<dbReference type="InterPro" id="IPR014029">
    <property type="entry name" value="NADH_UbQ_OxRdtase_49kDa_CS"/>
</dbReference>
<dbReference type="InterPro" id="IPR022885">
    <property type="entry name" value="NDH1_su_D/H"/>
</dbReference>
<dbReference type="InterPro" id="IPR029014">
    <property type="entry name" value="NiFe-Hase_large"/>
</dbReference>
<dbReference type="PANTHER" id="PTHR11993:SF10">
    <property type="entry name" value="NADH DEHYDROGENASE [UBIQUINONE] IRON-SULFUR PROTEIN 2, MITOCHONDRIAL"/>
    <property type="match status" value="1"/>
</dbReference>
<dbReference type="PANTHER" id="PTHR11993">
    <property type="entry name" value="NADH-UBIQUINONE OXIDOREDUCTASE 49 KDA SUBUNIT"/>
    <property type="match status" value="1"/>
</dbReference>
<dbReference type="SUPFAM" id="SSF56762">
    <property type="entry name" value="HydB/Nqo4-like"/>
    <property type="match status" value="1"/>
</dbReference>
<dbReference type="PROSITE" id="PS00535">
    <property type="entry name" value="COMPLEX1_49K"/>
    <property type="match status" value="1"/>
</dbReference>
<keyword id="KW-0150">Chloroplast</keyword>
<keyword id="KW-0472">Membrane</keyword>
<keyword id="KW-0520">NAD</keyword>
<keyword id="KW-0521">NADP</keyword>
<keyword id="KW-0934">Plastid</keyword>
<keyword id="KW-0618">Plastoquinone</keyword>
<keyword id="KW-0874">Quinone</keyword>
<keyword id="KW-0793">Thylakoid</keyword>
<keyword id="KW-1278">Translocase</keyword>
<keyword id="KW-0813">Transport</keyword>
<accession>P27758</accession>
<sequence length="90" mass="10509">IVTLDGEDVIDCEPILGYLHRGMEKIAENRTIIQYLPYVTRWDYLATMFTEAITVNAPEFLENIQIPQRASYIRVIMLELSRIASHLLWL</sequence>
<name>NDHH_SECCE</name>